<name>GCSH_SALRD</name>
<evidence type="ECO:0000255" key="1">
    <source>
        <dbReference type="HAMAP-Rule" id="MF_00272"/>
    </source>
</evidence>
<evidence type="ECO:0000255" key="2">
    <source>
        <dbReference type="PROSITE-ProRule" id="PRU01066"/>
    </source>
</evidence>
<dbReference type="EMBL" id="CP000159">
    <property type="protein sequence ID" value="ABC43644.1"/>
    <property type="molecule type" value="Genomic_DNA"/>
</dbReference>
<dbReference type="RefSeq" id="WP_011404804.1">
    <property type="nucleotide sequence ID" value="NC_007677.1"/>
</dbReference>
<dbReference type="RefSeq" id="YP_446182.1">
    <property type="nucleotide sequence ID" value="NC_007677.1"/>
</dbReference>
<dbReference type="SMR" id="Q2S0U9"/>
<dbReference type="STRING" id="309807.SRU_2076"/>
<dbReference type="EnsemblBacteria" id="ABC43644">
    <property type="protein sequence ID" value="ABC43644"/>
    <property type="gene ID" value="SRU_2076"/>
</dbReference>
<dbReference type="KEGG" id="sru:SRU_2076"/>
<dbReference type="PATRIC" id="fig|309807.25.peg.2160"/>
<dbReference type="eggNOG" id="COG0509">
    <property type="taxonomic scope" value="Bacteria"/>
</dbReference>
<dbReference type="HOGENOM" id="CLU_097408_2_0_10"/>
<dbReference type="OrthoDB" id="9796712at2"/>
<dbReference type="Proteomes" id="UP000008674">
    <property type="component" value="Chromosome"/>
</dbReference>
<dbReference type="GO" id="GO:0005737">
    <property type="term" value="C:cytoplasm"/>
    <property type="evidence" value="ECO:0007669"/>
    <property type="project" value="TreeGrafter"/>
</dbReference>
<dbReference type="GO" id="GO:0005960">
    <property type="term" value="C:glycine cleavage complex"/>
    <property type="evidence" value="ECO:0007669"/>
    <property type="project" value="InterPro"/>
</dbReference>
<dbReference type="GO" id="GO:0019464">
    <property type="term" value="P:glycine decarboxylation via glycine cleavage system"/>
    <property type="evidence" value="ECO:0007669"/>
    <property type="project" value="UniProtKB-UniRule"/>
</dbReference>
<dbReference type="CDD" id="cd06848">
    <property type="entry name" value="GCS_H"/>
    <property type="match status" value="1"/>
</dbReference>
<dbReference type="Gene3D" id="2.40.50.100">
    <property type="match status" value="1"/>
</dbReference>
<dbReference type="HAMAP" id="MF_00272">
    <property type="entry name" value="GcvH"/>
    <property type="match status" value="1"/>
</dbReference>
<dbReference type="InterPro" id="IPR003016">
    <property type="entry name" value="2-oxoA_DH_lipoyl-BS"/>
</dbReference>
<dbReference type="InterPro" id="IPR000089">
    <property type="entry name" value="Biotin_lipoyl"/>
</dbReference>
<dbReference type="InterPro" id="IPR002930">
    <property type="entry name" value="GCV_H"/>
</dbReference>
<dbReference type="InterPro" id="IPR033753">
    <property type="entry name" value="GCV_H/Fam206"/>
</dbReference>
<dbReference type="InterPro" id="IPR017453">
    <property type="entry name" value="GCV_H_sub"/>
</dbReference>
<dbReference type="InterPro" id="IPR011053">
    <property type="entry name" value="Single_hybrid_motif"/>
</dbReference>
<dbReference type="NCBIfam" id="TIGR00527">
    <property type="entry name" value="gcvH"/>
    <property type="match status" value="1"/>
</dbReference>
<dbReference type="NCBIfam" id="NF002270">
    <property type="entry name" value="PRK01202.1"/>
    <property type="match status" value="1"/>
</dbReference>
<dbReference type="PANTHER" id="PTHR11715">
    <property type="entry name" value="GLYCINE CLEAVAGE SYSTEM H PROTEIN"/>
    <property type="match status" value="1"/>
</dbReference>
<dbReference type="PANTHER" id="PTHR11715:SF3">
    <property type="entry name" value="GLYCINE CLEAVAGE SYSTEM H PROTEIN-RELATED"/>
    <property type="match status" value="1"/>
</dbReference>
<dbReference type="Pfam" id="PF01597">
    <property type="entry name" value="GCV_H"/>
    <property type="match status" value="1"/>
</dbReference>
<dbReference type="SUPFAM" id="SSF51230">
    <property type="entry name" value="Single hybrid motif"/>
    <property type="match status" value="1"/>
</dbReference>
<dbReference type="PROSITE" id="PS50968">
    <property type="entry name" value="BIOTINYL_LIPOYL"/>
    <property type="match status" value="1"/>
</dbReference>
<dbReference type="PROSITE" id="PS00189">
    <property type="entry name" value="LIPOYL"/>
    <property type="match status" value="1"/>
</dbReference>
<accession>Q2S0U9</accession>
<organism>
    <name type="scientific">Salinibacter ruber (strain DSM 13855 / M31)</name>
    <dbReference type="NCBI Taxonomy" id="309807"/>
    <lineage>
        <taxon>Bacteria</taxon>
        <taxon>Pseudomonadati</taxon>
        <taxon>Rhodothermota</taxon>
        <taxon>Rhodothermia</taxon>
        <taxon>Rhodothermales</taxon>
        <taxon>Salinibacteraceae</taxon>
        <taxon>Salinibacter</taxon>
    </lineage>
</organism>
<protein>
    <recommendedName>
        <fullName evidence="1">Glycine cleavage system H protein</fullName>
    </recommendedName>
</protein>
<proteinExistence type="inferred from homology"/>
<keyword id="KW-0450">Lipoyl</keyword>
<keyword id="KW-1185">Reference proteome</keyword>
<feature type="chain" id="PRO_0000302426" description="Glycine cleavage system H protein">
    <location>
        <begin position="1"/>
        <end position="124"/>
    </location>
</feature>
<feature type="domain" description="Lipoyl-binding" evidence="2">
    <location>
        <begin position="22"/>
        <end position="104"/>
    </location>
</feature>
<feature type="modified residue" description="N6-lipoyllysine" evidence="1">
    <location>
        <position position="63"/>
    </location>
</feature>
<reference key="1">
    <citation type="journal article" date="2005" name="Proc. Natl. Acad. Sci. U.S.A.">
        <title>The genome of Salinibacter ruber: convergence and gene exchange among hyperhalophilic bacteria and archaea.</title>
        <authorList>
            <person name="Mongodin E.F."/>
            <person name="Nelson K.E."/>
            <person name="Daugherty S."/>
            <person name="DeBoy R.T."/>
            <person name="Wister J."/>
            <person name="Khouri H."/>
            <person name="Weidman J."/>
            <person name="Walsh D.A."/>
            <person name="Papke R.T."/>
            <person name="Sanchez Perez G."/>
            <person name="Sharma A.K."/>
            <person name="Nesbo C.L."/>
            <person name="MacLeod D."/>
            <person name="Bapteste E."/>
            <person name="Doolittle W.F."/>
            <person name="Charlebois R.L."/>
            <person name="Legault B."/>
            <person name="Rodriguez-Valera F."/>
        </authorList>
    </citation>
    <scope>NUCLEOTIDE SEQUENCE [LARGE SCALE GENOMIC DNA]</scope>
    <source>
        <strain>DSM 13855 / CECT 5946 / M31</strain>
    </source>
</reference>
<sequence length="124" mass="13551">MDTPDDLYYTDDHEWLRVENGTATVGITDFAQSELGDIVFVELEPEGTKLGQDDIFGTVEAVKTVSELYMPVGGTITAINTELELSPEVVNEDPYGDGWMIEIELAAPDEAEELMGADAYAEVT</sequence>
<gene>
    <name evidence="1" type="primary">gcvH</name>
    <name type="ordered locus">SRU_2076</name>
</gene>
<comment type="function">
    <text evidence="1">The glycine cleavage system catalyzes the degradation of glycine. The H protein shuttles the methylamine group of glycine from the P protein to the T protein.</text>
</comment>
<comment type="cofactor">
    <cofactor evidence="1">
        <name>(R)-lipoate</name>
        <dbReference type="ChEBI" id="CHEBI:83088"/>
    </cofactor>
    <text evidence="1">Binds 1 lipoyl cofactor covalently.</text>
</comment>
<comment type="subunit">
    <text evidence="1">The glycine cleavage system is composed of four proteins: P, T, L and H.</text>
</comment>
<comment type="similarity">
    <text evidence="1">Belongs to the GcvH family.</text>
</comment>